<dbReference type="EC" id="7.2.1.1" evidence="1"/>
<dbReference type="EMBL" id="AE002098">
    <property type="protein sequence ID" value="AAF40992.1"/>
    <property type="molecule type" value="Genomic_DNA"/>
</dbReference>
<dbReference type="PIR" id="G81184">
    <property type="entry name" value="G81184"/>
</dbReference>
<dbReference type="RefSeq" id="NP_273608.1">
    <property type="nucleotide sequence ID" value="NC_003112.2"/>
</dbReference>
<dbReference type="RefSeq" id="WP_002225565.1">
    <property type="nucleotide sequence ID" value="NC_003112.2"/>
</dbReference>
<dbReference type="SMR" id="Q9K0M8"/>
<dbReference type="STRING" id="122586.NMB0564"/>
<dbReference type="PaxDb" id="122586-NMB0564"/>
<dbReference type="GeneID" id="49971554"/>
<dbReference type="KEGG" id="nme:NMB0564"/>
<dbReference type="PATRIC" id="fig|122586.8.peg.723"/>
<dbReference type="HOGENOM" id="CLU_003827_7_2_4"/>
<dbReference type="InParanoid" id="Q9K0M8"/>
<dbReference type="OrthoDB" id="9806195at2"/>
<dbReference type="Proteomes" id="UP000000425">
    <property type="component" value="Chromosome"/>
</dbReference>
<dbReference type="GO" id="GO:0005886">
    <property type="term" value="C:plasma membrane"/>
    <property type="evidence" value="ECO:0007669"/>
    <property type="project" value="UniProtKB-SubCell"/>
</dbReference>
<dbReference type="GO" id="GO:0051537">
    <property type="term" value="F:2 iron, 2 sulfur cluster binding"/>
    <property type="evidence" value="ECO:0007669"/>
    <property type="project" value="UniProtKB-KW"/>
</dbReference>
<dbReference type="GO" id="GO:0009055">
    <property type="term" value="F:electron transfer activity"/>
    <property type="evidence" value="ECO:0007669"/>
    <property type="project" value="UniProtKB-UniRule"/>
</dbReference>
<dbReference type="GO" id="GO:0046872">
    <property type="term" value="F:metal ion binding"/>
    <property type="evidence" value="ECO:0007669"/>
    <property type="project" value="UniProtKB-KW"/>
</dbReference>
<dbReference type="GO" id="GO:0016655">
    <property type="term" value="F:oxidoreductase activity, acting on NAD(P)H, quinone or similar compound as acceptor"/>
    <property type="evidence" value="ECO:0007669"/>
    <property type="project" value="InterPro"/>
</dbReference>
<dbReference type="GO" id="GO:0006814">
    <property type="term" value="P:sodium ion transport"/>
    <property type="evidence" value="ECO:0007669"/>
    <property type="project" value="UniProtKB-UniRule"/>
</dbReference>
<dbReference type="CDD" id="cd06188">
    <property type="entry name" value="NADH_quinone_reductase"/>
    <property type="match status" value="1"/>
</dbReference>
<dbReference type="FunFam" id="2.40.30.10:FF:000064">
    <property type="entry name" value="Na(+)-translocating NADH-quinone reductase subunit F"/>
    <property type="match status" value="1"/>
</dbReference>
<dbReference type="FunFam" id="3.40.50.80:FF:000014">
    <property type="entry name" value="Na(+)-translocating NADH-quinone reductase subunit F"/>
    <property type="match status" value="1"/>
</dbReference>
<dbReference type="Gene3D" id="3.10.20.30">
    <property type="match status" value="1"/>
</dbReference>
<dbReference type="Gene3D" id="3.40.50.80">
    <property type="entry name" value="Nucleotide-binding domain of ferredoxin-NADP reductase (FNR) module"/>
    <property type="match status" value="1"/>
</dbReference>
<dbReference type="Gene3D" id="2.40.30.10">
    <property type="entry name" value="Translation factors"/>
    <property type="match status" value="1"/>
</dbReference>
<dbReference type="HAMAP" id="MF_00430">
    <property type="entry name" value="NqrF"/>
    <property type="match status" value="1"/>
</dbReference>
<dbReference type="InterPro" id="IPR036010">
    <property type="entry name" value="2Fe-2S_ferredoxin-like_sf"/>
</dbReference>
<dbReference type="InterPro" id="IPR001041">
    <property type="entry name" value="2Fe-2S_ferredoxin-type"/>
</dbReference>
<dbReference type="InterPro" id="IPR012675">
    <property type="entry name" value="Beta-grasp_dom_sf"/>
</dbReference>
<dbReference type="InterPro" id="IPR008333">
    <property type="entry name" value="Cbr1-like_FAD-bd_dom"/>
</dbReference>
<dbReference type="InterPro" id="IPR017927">
    <property type="entry name" value="FAD-bd_FR_type"/>
</dbReference>
<dbReference type="InterPro" id="IPR039261">
    <property type="entry name" value="FNR_nucleotide-bd"/>
</dbReference>
<dbReference type="InterPro" id="IPR010205">
    <property type="entry name" value="NqrF"/>
</dbReference>
<dbReference type="InterPro" id="IPR001433">
    <property type="entry name" value="OxRdtase_FAD/NAD-bd"/>
</dbReference>
<dbReference type="InterPro" id="IPR017938">
    <property type="entry name" value="Riboflavin_synthase-like_b-brl"/>
</dbReference>
<dbReference type="NCBIfam" id="TIGR01941">
    <property type="entry name" value="nqrF"/>
    <property type="match status" value="1"/>
</dbReference>
<dbReference type="PANTHER" id="PTHR43644">
    <property type="entry name" value="NA(+)-TRANSLOCATING NADH-QUINONE REDUCTASE SUBUNIT"/>
    <property type="match status" value="1"/>
</dbReference>
<dbReference type="PANTHER" id="PTHR43644:SF1">
    <property type="entry name" value="NAD(P)H-FLAVIN REDUCTASE"/>
    <property type="match status" value="1"/>
</dbReference>
<dbReference type="Pfam" id="PF00970">
    <property type="entry name" value="FAD_binding_6"/>
    <property type="match status" value="1"/>
</dbReference>
<dbReference type="Pfam" id="PF00111">
    <property type="entry name" value="Fer2"/>
    <property type="match status" value="1"/>
</dbReference>
<dbReference type="Pfam" id="PF00175">
    <property type="entry name" value="NAD_binding_1"/>
    <property type="match status" value="1"/>
</dbReference>
<dbReference type="PIRSF" id="PIRSF000044">
    <property type="entry name" value="Cis_Diol_DH_RD"/>
    <property type="match status" value="1"/>
</dbReference>
<dbReference type="SUPFAM" id="SSF54292">
    <property type="entry name" value="2Fe-2S ferredoxin-like"/>
    <property type="match status" value="1"/>
</dbReference>
<dbReference type="SUPFAM" id="SSF52343">
    <property type="entry name" value="Ferredoxin reductase-like, C-terminal NADP-linked domain"/>
    <property type="match status" value="1"/>
</dbReference>
<dbReference type="SUPFAM" id="SSF63380">
    <property type="entry name" value="Riboflavin synthase domain-like"/>
    <property type="match status" value="1"/>
</dbReference>
<dbReference type="PROSITE" id="PS51085">
    <property type="entry name" value="2FE2S_FER_2"/>
    <property type="match status" value="1"/>
</dbReference>
<dbReference type="PROSITE" id="PS51384">
    <property type="entry name" value="FAD_FR"/>
    <property type="match status" value="1"/>
</dbReference>
<protein>
    <recommendedName>
        <fullName evidence="1">Na(+)-translocating NADH-quinone reductase subunit F</fullName>
        <shortName evidence="1">Na(+)-NQR subunit F</shortName>
        <shortName evidence="1">Na(+)-translocating NQR subunit F</shortName>
        <ecNumber evidence="1">7.2.1.1</ecNumber>
    </recommendedName>
    <alternativeName>
        <fullName evidence="1">NQR complex subunit F</fullName>
    </alternativeName>
    <alternativeName>
        <fullName evidence="1">NQR-1 subunit F</fullName>
    </alternativeName>
</protein>
<keyword id="KW-0001">2Fe-2S</keyword>
<keyword id="KW-0997">Cell inner membrane</keyword>
<keyword id="KW-1003">Cell membrane</keyword>
<keyword id="KW-0274">FAD</keyword>
<keyword id="KW-0285">Flavoprotein</keyword>
<keyword id="KW-0406">Ion transport</keyword>
<keyword id="KW-0408">Iron</keyword>
<keyword id="KW-0411">Iron-sulfur</keyword>
<keyword id="KW-0472">Membrane</keyword>
<keyword id="KW-0479">Metal-binding</keyword>
<keyword id="KW-0520">NAD</keyword>
<keyword id="KW-1185">Reference proteome</keyword>
<keyword id="KW-0915">Sodium</keyword>
<keyword id="KW-0739">Sodium transport</keyword>
<keyword id="KW-1278">Translocase</keyword>
<keyword id="KW-0812">Transmembrane</keyword>
<keyword id="KW-1133">Transmembrane helix</keyword>
<keyword id="KW-0813">Transport</keyword>
<keyword id="KW-0830">Ubiquinone</keyword>
<comment type="function">
    <text evidence="1">NQR complex catalyzes the reduction of ubiquinone-1 to ubiquinol by two successive reactions, coupled with the transport of Na(+) ions from the cytoplasm to the periplasm. The first step is catalyzed by NqrF, which accepts electrons from NADH and reduces ubiquinone-1 to ubisemiquinone by a one-electron transfer pathway.</text>
</comment>
<comment type="catalytic activity">
    <reaction evidence="1">
        <text>a ubiquinone + n Na(+)(in) + NADH + H(+) = a ubiquinol + n Na(+)(out) + NAD(+)</text>
        <dbReference type="Rhea" id="RHEA:47748"/>
        <dbReference type="Rhea" id="RHEA-COMP:9565"/>
        <dbReference type="Rhea" id="RHEA-COMP:9566"/>
        <dbReference type="ChEBI" id="CHEBI:15378"/>
        <dbReference type="ChEBI" id="CHEBI:16389"/>
        <dbReference type="ChEBI" id="CHEBI:17976"/>
        <dbReference type="ChEBI" id="CHEBI:29101"/>
        <dbReference type="ChEBI" id="CHEBI:57540"/>
        <dbReference type="ChEBI" id="CHEBI:57945"/>
        <dbReference type="EC" id="7.2.1.1"/>
    </reaction>
</comment>
<comment type="cofactor">
    <cofactor evidence="1">
        <name>[2Fe-2S] cluster</name>
        <dbReference type="ChEBI" id="CHEBI:190135"/>
    </cofactor>
    <text evidence="1">Binds 1 [2Fe-2S] cluster.</text>
</comment>
<comment type="cofactor">
    <cofactor evidence="1">
        <name>FAD</name>
        <dbReference type="ChEBI" id="CHEBI:57692"/>
    </cofactor>
</comment>
<comment type="subunit">
    <text evidence="1">Composed of six subunits; NqrA, NqrB, NqrC, NqrD, NqrE and NqrF.</text>
</comment>
<comment type="subcellular location">
    <subcellularLocation>
        <location evidence="1">Cell inner membrane</location>
        <topology evidence="1">Single-pass membrane protein</topology>
    </subcellularLocation>
</comment>
<comment type="similarity">
    <text evidence="1">Belongs to the NqrF family.</text>
</comment>
<feature type="chain" id="PRO_0000074498" description="Na(+)-translocating NADH-quinone reductase subunit F">
    <location>
        <begin position="1"/>
        <end position="405"/>
    </location>
</feature>
<feature type="transmembrane region" description="Helical" evidence="1">
    <location>
        <begin position="3"/>
        <end position="23"/>
    </location>
</feature>
<feature type="domain" description="2Fe-2S ferredoxin-type" evidence="1">
    <location>
        <begin position="32"/>
        <end position="124"/>
    </location>
</feature>
<feature type="domain" description="FAD-binding FR-type" evidence="1">
    <location>
        <begin position="127"/>
        <end position="267"/>
    </location>
</feature>
<feature type="region of interest" description="Catalytic">
    <location>
        <begin position="270"/>
        <end position="387"/>
    </location>
</feature>
<feature type="binding site" evidence="1">
    <location>
        <position position="67"/>
    </location>
    <ligand>
        <name>[2Fe-2S] cluster</name>
        <dbReference type="ChEBI" id="CHEBI:190135"/>
    </ligand>
</feature>
<feature type="binding site" evidence="1">
    <location>
        <position position="73"/>
    </location>
    <ligand>
        <name>[2Fe-2S] cluster</name>
        <dbReference type="ChEBI" id="CHEBI:190135"/>
    </ligand>
</feature>
<feature type="binding site" evidence="1">
    <location>
        <position position="76"/>
    </location>
    <ligand>
        <name>[2Fe-2S] cluster</name>
        <dbReference type="ChEBI" id="CHEBI:190135"/>
    </ligand>
</feature>
<feature type="binding site" evidence="1">
    <location>
        <position position="108"/>
    </location>
    <ligand>
        <name>[2Fe-2S] cluster</name>
        <dbReference type="ChEBI" id="CHEBI:190135"/>
    </ligand>
</feature>
<evidence type="ECO:0000255" key="1">
    <source>
        <dbReference type="HAMAP-Rule" id="MF_00430"/>
    </source>
</evidence>
<sequence length="405" mass="45164">MEIILGIVMFTVIVLVLALMILFAKSKLVSEGDITIKVNGEKELTMPAGGKLLGALANEGIFIPSACGGGGSCGQCRVVVKSGGGDILPTELSHISKREAREGCRLSCQVNVKTDMDIEVPEEVFGVKKWECTVISNDNKATFIKELKLAIPEGEEVPFRAGGYIQIEAPPHTVAYKDFDIPKEYHEDWDKYNLWQYVSKVDEPILRAYSMASYPEEKGIIMLNVRIATPPPRVPDAPPGQMSSYIWSLKPGDKVTISGPFGEFFAKDTDAEMVFIGGGAGMAPMRSHIFDQLKRLNSKRKITFWYGARSKREMFYVEDFDQLAAEFPNFTWHVALSDPLPEDNWDGYTGFIHNVVYENHLKNHEAPEDCEFYMCGPPIMNQSVIKMLKDLGVEDENILLDDFGG</sequence>
<proteinExistence type="inferred from homology"/>
<gene>
    <name evidence="1" type="primary">nqrF</name>
    <name type="ordered locus">NMB0564</name>
</gene>
<organism>
    <name type="scientific">Neisseria meningitidis serogroup B (strain ATCC BAA-335 / MC58)</name>
    <dbReference type="NCBI Taxonomy" id="122586"/>
    <lineage>
        <taxon>Bacteria</taxon>
        <taxon>Pseudomonadati</taxon>
        <taxon>Pseudomonadota</taxon>
        <taxon>Betaproteobacteria</taxon>
        <taxon>Neisseriales</taxon>
        <taxon>Neisseriaceae</taxon>
        <taxon>Neisseria</taxon>
    </lineage>
</organism>
<reference key="1">
    <citation type="journal article" date="2000" name="Science">
        <title>Complete genome sequence of Neisseria meningitidis serogroup B strain MC58.</title>
        <authorList>
            <person name="Tettelin H."/>
            <person name="Saunders N.J."/>
            <person name="Heidelberg J.F."/>
            <person name="Jeffries A.C."/>
            <person name="Nelson K.E."/>
            <person name="Eisen J.A."/>
            <person name="Ketchum K.A."/>
            <person name="Hood D.W."/>
            <person name="Peden J.F."/>
            <person name="Dodson R.J."/>
            <person name="Nelson W.C."/>
            <person name="Gwinn M.L."/>
            <person name="DeBoy R.T."/>
            <person name="Peterson J.D."/>
            <person name="Hickey E.K."/>
            <person name="Haft D.H."/>
            <person name="Salzberg S.L."/>
            <person name="White O."/>
            <person name="Fleischmann R.D."/>
            <person name="Dougherty B.A."/>
            <person name="Mason T.M."/>
            <person name="Ciecko A."/>
            <person name="Parksey D.S."/>
            <person name="Blair E."/>
            <person name="Cittone H."/>
            <person name="Clark E.B."/>
            <person name="Cotton M.D."/>
            <person name="Utterback T.R."/>
            <person name="Khouri H.M."/>
            <person name="Qin H."/>
            <person name="Vamathevan J.J."/>
            <person name="Gill J."/>
            <person name="Scarlato V."/>
            <person name="Masignani V."/>
            <person name="Pizza M."/>
            <person name="Grandi G."/>
            <person name="Sun L."/>
            <person name="Smith H.O."/>
            <person name="Fraser C.M."/>
            <person name="Moxon E.R."/>
            <person name="Rappuoli R."/>
            <person name="Venter J.C."/>
        </authorList>
    </citation>
    <scope>NUCLEOTIDE SEQUENCE [LARGE SCALE GENOMIC DNA]</scope>
    <source>
        <strain>ATCC BAA-335 / MC58</strain>
    </source>
</reference>
<accession>Q9K0M8</accession>
<name>NQRF_NEIMB</name>